<dbReference type="EMBL" id="BA000018">
    <property type="protein sequence ID" value="BAB43357.1"/>
    <property type="molecule type" value="Genomic_DNA"/>
</dbReference>
<dbReference type="PIR" id="D90024">
    <property type="entry name" value="D90024"/>
</dbReference>
<dbReference type="RefSeq" id="WP_000951058.1">
    <property type="nucleotide sequence ID" value="NC_002745.2"/>
</dbReference>
<dbReference type="SMR" id="P62087"/>
<dbReference type="EnsemblBacteria" id="BAB43357">
    <property type="protein sequence ID" value="BAB43357"/>
    <property type="gene ID" value="BAB43357"/>
</dbReference>
<dbReference type="KEGG" id="sau:SA2060"/>
<dbReference type="HOGENOM" id="CLU_083287_18_2_9"/>
<dbReference type="GO" id="GO:0003677">
    <property type="term" value="F:DNA binding"/>
    <property type="evidence" value="ECO:0007669"/>
    <property type="project" value="UniProtKB-KW"/>
</dbReference>
<dbReference type="GO" id="GO:0003700">
    <property type="term" value="F:DNA-binding transcription factor activity"/>
    <property type="evidence" value="ECO:0007669"/>
    <property type="project" value="InterPro"/>
</dbReference>
<dbReference type="GO" id="GO:0006950">
    <property type="term" value="P:response to stress"/>
    <property type="evidence" value="ECO:0007669"/>
    <property type="project" value="TreeGrafter"/>
</dbReference>
<dbReference type="FunFam" id="1.10.10.10:FF:000684">
    <property type="entry name" value="Transcriptional regulator, MarR family"/>
    <property type="match status" value="1"/>
</dbReference>
<dbReference type="Gene3D" id="1.10.10.10">
    <property type="entry name" value="Winged helix-like DNA-binding domain superfamily/Winged helix DNA-binding domain"/>
    <property type="match status" value="1"/>
</dbReference>
<dbReference type="InterPro" id="IPR000835">
    <property type="entry name" value="HTH_MarR-typ"/>
</dbReference>
<dbReference type="InterPro" id="IPR039422">
    <property type="entry name" value="MarR/SlyA-like"/>
</dbReference>
<dbReference type="InterPro" id="IPR023187">
    <property type="entry name" value="Tscrpt_reg_MarR-type_CS"/>
</dbReference>
<dbReference type="InterPro" id="IPR036388">
    <property type="entry name" value="WH-like_DNA-bd_sf"/>
</dbReference>
<dbReference type="InterPro" id="IPR036390">
    <property type="entry name" value="WH_DNA-bd_sf"/>
</dbReference>
<dbReference type="PANTHER" id="PTHR33164">
    <property type="entry name" value="TRANSCRIPTIONAL REGULATOR, MARR FAMILY"/>
    <property type="match status" value="1"/>
</dbReference>
<dbReference type="PANTHER" id="PTHR33164:SF44">
    <property type="entry name" value="TRANSCRIPTIONAL REGULATORY PROTEIN"/>
    <property type="match status" value="1"/>
</dbReference>
<dbReference type="Pfam" id="PF01047">
    <property type="entry name" value="MarR"/>
    <property type="match status" value="1"/>
</dbReference>
<dbReference type="SMART" id="SM00347">
    <property type="entry name" value="HTH_MARR"/>
    <property type="match status" value="1"/>
</dbReference>
<dbReference type="SUPFAM" id="SSF46785">
    <property type="entry name" value="Winged helix' DNA-binding domain"/>
    <property type="match status" value="1"/>
</dbReference>
<dbReference type="PROSITE" id="PS01117">
    <property type="entry name" value="HTH_MARR_1"/>
    <property type="match status" value="1"/>
</dbReference>
<dbReference type="PROSITE" id="PS50995">
    <property type="entry name" value="HTH_MARR_2"/>
    <property type="match status" value="1"/>
</dbReference>
<organism>
    <name type="scientific">Staphylococcus aureus (strain N315)</name>
    <dbReference type="NCBI Taxonomy" id="158879"/>
    <lineage>
        <taxon>Bacteria</taxon>
        <taxon>Bacillati</taxon>
        <taxon>Bacillota</taxon>
        <taxon>Bacilli</taxon>
        <taxon>Bacillales</taxon>
        <taxon>Staphylococcaceae</taxon>
        <taxon>Staphylococcus</taxon>
    </lineage>
</organism>
<accession>P62087</accession>
<accession>Q99S07</accession>
<gene>
    <name type="ordered locus">SA2060</name>
</gene>
<sequence length="146" mass="17152">MLSQEFFNSFITIYRPYLKLAEPILEKHNIYYGQWLILRDIAKHQPTTLIEISHRRAIEKPTARKTLKALIENDLITVENSLEDKRQKFLTLTPKGHELYEIVCLDVQKLQQAVVAKTNISQDQMQETINVMNQIHEILLKEAHND</sequence>
<name>Y2060_STAAN</name>
<reference key="1">
    <citation type="journal article" date="2001" name="Lancet">
        <title>Whole genome sequencing of meticillin-resistant Staphylococcus aureus.</title>
        <authorList>
            <person name="Kuroda M."/>
            <person name="Ohta T."/>
            <person name="Uchiyama I."/>
            <person name="Baba T."/>
            <person name="Yuzawa H."/>
            <person name="Kobayashi I."/>
            <person name="Cui L."/>
            <person name="Oguchi A."/>
            <person name="Aoki K."/>
            <person name="Nagai Y."/>
            <person name="Lian J.-Q."/>
            <person name="Ito T."/>
            <person name="Kanamori M."/>
            <person name="Matsumaru H."/>
            <person name="Maruyama A."/>
            <person name="Murakami H."/>
            <person name="Hosoyama A."/>
            <person name="Mizutani-Ui Y."/>
            <person name="Takahashi N.K."/>
            <person name="Sawano T."/>
            <person name="Inoue R."/>
            <person name="Kaito C."/>
            <person name="Sekimizu K."/>
            <person name="Hirakawa H."/>
            <person name="Kuhara S."/>
            <person name="Goto S."/>
            <person name="Yabuzaki J."/>
            <person name="Kanehisa M."/>
            <person name="Yamashita A."/>
            <person name="Oshima K."/>
            <person name="Furuya K."/>
            <person name="Yoshino C."/>
            <person name="Shiba T."/>
            <person name="Hattori M."/>
            <person name="Ogasawara N."/>
            <person name="Hayashi H."/>
            <person name="Hiramatsu K."/>
        </authorList>
    </citation>
    <scope>NUCLEOTIDE SEQUENCE [LARGE SCALE GENOMIC DNA]</scope>
    <source>
        <strain>N315</strain>
    </source>
</reference>
<keyword id="KW-0238">DNA-binding</keyword>
<keyword id="KW-0804">Transcription</keyword>
<keyword id="KW-0805">Transcription regulation</keyword>
<feature type="chain" id="PRO_0000054414" description="Uncharacterized HTH-type transcriptional regulator SA2060">
    <location>
        <begin position="1"/>
        <end position="146"/>
    </location>
</feature>
<feature type="domain" description="HTH marR-type" evidence="1">
    <location>
        <begin position="1"/>
        <end position="137"/>
    </location>
</feature>
<evidence type="ECO:0000255" key="1">
    <source>
        <dbReference type="PROSITE-ProRule" id="PRU00345"/>
    </source>
</evidence>
<protein>
    <recommendedName>
        <fullName>Uncharacterized HTH-type transcriptional regulator SA2060</fullName>
    </recommendedName>
</protein>
<proteinExistence type="predicted"/>